<accession>B5EZ72</accession>
<comment type="function">
    <text evidence="1">Catalyzes the radical-mediated insertion of two sulfur atoms into the C-6 and C-8 positions of the octanoyl moiety bound to the lipoyl domains of lipoate-dependent enzymes, thereby converting the octanoylated domains into lipoylated derivatives.</text>
</comment>
<comment type="catalytic activity">
    <reaction evidence="1">
        <text>[[Fe-S] cluster scaffold protein carrying a second [4Fe-4S](2+) cluster] + N(6)-octanoyl-L-lysyl-[protein] + 2 oxidized [2Fe-2S]-[ferredoxin] + 2 S-adenosyl-L-methionine + 4 H(+) = [[Fe-S] cluster scaffold protein] + N(6)-[(R)-dihydrolipoyl]-L-lysyl-[protein] + 4 Fe(3+) + 2 hydrogen sulfide + 2 5'-deoxyadenosine + 2 L-methionine + 2 reduced [2Fe-2S]-[ferredoxin]</text>
        <dbReference type="Rhea" id="RHEA:16585"/>
        <dbReference type="Rhea" id="RHEA-COMP:9928"/>
        <dbReference type="Rhea" id="RHEA-COMP:10000"/>
        <dbReference type="Rhea" id="RHEA-COMP:10001"/>
        <dbReference type="Rhea" id="RHEA-COMP:10475"/>
        <dbReference type="Rhea" id="RHEA-COMP:14568"/>
        <dbReference type="Rhea" id="RHEA-COMP:14569"/>
        <dbReference type="ChEBI" id="CHEBI:15378"/>
        <dbReference type="ChEBI" id="CHEBI:17319"/>
        <dbReference type="ChEBI" id="CHEBI:29034"/>
        <dbReference type="ChEBI" id="CHEBI:29919"/>
        <dbReference type="ChEBI" id="CHEBI:33722"/>
        <dbReference type="ChEBI" id="CHEBI:33737"/>
        <dbReference type="ChEBI" id="CHEBI:33738"/>
        <dbReference type="ChEBI" id="CHEBI:57844"/>
        <dbReference type="ChEBI" id="CHEBI:59789"/>
        <dbReference type="ChEBI" id="CHEBI:78809"/>
        <dbReference type="ChEBI" id="CHEBI:83100"/>
        <dbReference type="EC" id="2.8.1.8"/>
    </reaction>
</comment>
<comment type="cofactor">
    <cofactor evidence="1">
        <name>[4Fe-4S] cluster</name>
        <dbReference type="ChEBI" id="CHEBI:49883"/>
    </cofactor>
    <text evidence="1">Binds 2 [4Fe-4S] clusters per subunit. One cluster is coordinated with 3 cysteines and an exchangeable S-adenosyl-L-methionine.</text>
</comment>
<comment type="pathway">
    <text evidence="1">Protein modification; protein lipoylation via endogenous pathway; protein N(6)-(lipoyl)lysine from octanoyl-[acyl-carrier-protein]: step 2/2.</text>
</comment>
<comment type="subcellular location">
    <subcellularLocation>
        <location evidence="1">Cytoplasm</location>
    </subcellularLocation>
</comment>
<comment type="similarity">
    <text evidence="1">Belongs to the radical SAM superfamily. Lipoyl synthase family.</text>
</comment>
<evidence type="ECO:0000255" key="1">
    <source>
        <dbReference type="HAMAP-Rule" id="MF_00206"/>
    </source>
</evidence>
<evidence type="ECO:0000255" key="2">
    <source>
        <dbReference type="PROSITE-ProRule" id="PRU01266"/>
    </source>
</evidence>
<organism>
    <name type="scientific">Salmonella agona (strain SL483)</name>
    <dbReference type="NCBI Taxonomy" id="454166"/>
    <lineage>
        <taxon>Bacteria</taxon>
        <taxon>Pseudomonadati</taxon>
        <taxon>Pseudomonadota</taxon>
        <taxon>Gammaproteobacteria</taxon>
        <taxon>Enterobacterales</taxon>
        <taxon>Enterobacteriaceae</taxon>
        <taxon>Salmonella</taxon>
    </lineage>
</organism>
<protein>
    <recommendedName>
        <fullName evidence="1">Lipoyl synthase</fullName>
        <ecNumber evidence="1">2.8.1.8</ecNumber>
    </recommendedName>
    <alternativeName>
        <fullName evidence="1">Lip-syn</fullName>
        <shortName evidence="1">LS</shortName>
    </alternativeName>
    <alternativeName>
        <fullName evidence="1">Lipoate synthase</fullName>
    </alternativeName>
    <alternativeName>
        <fullName evidence="1">Lipoic acid synthase</fullName>
    </alternativeName>
    <alternativeName>
        <fullName evidence="1">Sulfur insertion protein LipA</fullName>
    </alternativeName>
</protein>
<gene>
    <name evidence="1" type="primary">lipA</name>
    <name type="ordered locus">SeAg_B0674</name>
</gene>
<keyword id="KW-0004">4Fe-4S</keyword>
<keyword id="KW-0963">Cytoplasm</keyword>
<keyword id="KW-0408">Iron</keyword>
<keyword id="KW-0411">Iron-sulfur</keyword>
<keyword id="KW-0479">Metal-binding</keyword>
<keyword id="KW-0949">S-adenosyl-L-methionine</keyword>
<keyword id="KW-0808">Transferase</keyword>
<sequence length="321" mass="36042">MSKPIVMERGVKYRDADKMALIPVKNVVTERDALLRKPEWMKIKLPADSTRIQGIKAAMRKNGLHSVCEEASCPNLAECFNHGTATFMILGAICTRRCPFCDVAHGRPVAPDAEEPQKLAQTIADMALRYVVITSVDRDDLRDGGAQHFADCITAIRAKSPEIKIETLVPDFRGRMDRALDILNATPPDVFNHNLENVPRIYRQVRPGADYNWSLKLLERFKEAHPEIPTKSGLMVGLGETNAEIIEVMRDLRRHGVTMLTLGQYLQPSRHHLPVQRYVSPEEFDEMKAEALAMGFTHAACGPFVRSSYHADLQAKGMEVK</sequence>
<feature type="chain" id="PRO_1000099627" description="Lipoyl synthase">
    <location>
        <begin position="1"/>
        <end position="321"/>
    </location>
</feature>
<feature type="domain" description="Radical SAM core" evidence="2">
    <location>
        <begin position="80"/>
        <end position="297"/>
    </location>
</feature>
<feature type="binding site" evidence="1">
    <location>
        <position position="68"/>
    </location>
    <ligand>
        <name>[4Fe-4S] cluster</name>
        <dbReference type="ChEBI" id="CHEBI:49883"/>
        <label>1</label>
    </ligand>
</feature>
<feature type="binding site" evidence="1">
    <location>
        <position position="73"/>
    </location>
    <ligand>
        <name>[4Fe-4S] cluster</name>
        <dbReference type="ChEBI" id="CHEBI:49883"/>
        <label>1</label>
    </ligand>
</feature>
<feature type="binding site" evidence="1">
    <location>
        <position position="79"/>
    </location>
    <ligand>
        <name>[4Fe-4S] cluster</name>
        <dbReference type="ChEBI" id="CHEBI:49883"/>
        <label>1</label>
    </ligand>
</feature>
<feature type="binding site" evidence="1">
    <location>
        <position position="94"/>
    </location>
    <ligand>
        <name>[4Fe-4S] cluster</name>
        <dbReference type="ChEBI" id="CHEBI:49883"/>
        <label>2</label>
        <note>4Fe-4S-S-AdoMet</note>
    </ligand>
</feature>
<feature type="binding site" evidence="1">
    <location>
        <position position="98"/>
    </location>
    <ligand>
        <name>[4Fe-4S] cluster</name>
        <dbReference type="ChEBI" id="CHEBI:49883"/>
        <label>2</label>
        <note>4Fe-4S-S-AdoMet</note>
    </ligand>
</feature>
<feature type="binding site" evidence="1">
    <location>
        <position position="101"/>
    </location>
    <ligand>
        <name>[4Fe-4S] cluster</name>
        <dbReference type="ChEBI" id="CHEBI:49883"/>
        <label>2</label>
        <note>4Fe-4S-S-AdoMet</note>
    </ligand>
</feature>
<feature type="binding site" evidence="1">
    <location>
        <position position="308"/>
    </location>
    <ligand>
        <name>[4Fe-4S] cluster</name>
        <dbReference type="ChEBI" id="CHEBI:49883"/>
        <label>1</label>
    </ligand>
</feature>
<proteinExistence type="inferred from homology"/>
<reference key="1">
    <citation type="journal article" date="2011" name="J. Bacteriol.">
        <title>Comparative genomics of 28 Salmonella enterica isolates: evidence for CRISPR-mediated adaptive sublineage evolution.</title>
        <authorList>
            <person name="Fricke W.F."/>
            <person name="Mammel M.K."/>
            <person name="McDermott P.F."/>
            <person name="Tartera C."/>
            <person name="White D.G."/>
            <person name="Leclerc J.E."/>
            <person name="Ravel J."/>
            <person name="Cebula T.A."/>
        </authorList>
    </citation>
    <scope>NUCLEOTIDE SEQUENCE [LARGE SCALE GENOMIC DNA]</scope>
    <source>
        <strain>SL483</strain>
    </source>
</reference>
<name>LIPA_SALA4</name>
<dbReference type="EC" id="2.8.1.8" evidence="1"/>
<dbReference type="EMBL" id="CP001138">
    <property type="protein sequence ID" value="ACH50162.1"/>
    <property type="molecule type" value="Genomic_DNA"/>
</dbReference>
<dbReference type="RefSeq" id="WP_000042640.1">
    <property type="nucleotide sequence ID" value="NC_011149.1"/>
</dbReference>
<dbReference type="SMR" id="B5EZ72"/>
<dbReference type="KEGG" id="sea:SeAg_B0674"/>
<dbReference type="HOGENOM" id="CLU_033144_2_1_6"/>
<dbReference type="UniPathway" id="UPA00538">
    <property type="reaction ID" value="UER00593"/>
</dbReference>
<dbReference type="Proteomes" id="UP000008819">
    <property type="component" value="Chromosome"/>
</dbReference>
<dbReference type="GO" id="GO:0005737">
    <property type="term" value="C:cytoplasm"/>
    <property type="evidence" value="ECO:0007669"/>
    <property type="project" value="UniProtKB-SubCell"/>
</dbReference>
<dbReference type="GO" id="GO:0051539">
    <property type="term" value="F:4 iron, 4 sulfur cluster binding"/>
    <property type="evidence" value="ECO:0007669"/>
    <property type="project" value="UniProtKB-UniRule"/>
</dbReference>
<dbReference type="GO" id="GO:0016992">
    <property type="term" value="F:lipoate synthase activity"/>
    <property type="evidence" value="ECO:0007669"/>
    <property type="project" value="UniProtKB-UniRule"/>
</dbReference>
<dbReference type="GO" id="GO:0046872">
    <property type="term" value="F:metal ion binding"/>
    <property type="evidence" value="ECO:0007669"/>
    <property type="project" value="UniProtKB-KW"/>
</dbReference>
<dbReference type="CDD" id="cd01335">
    <property type="entry name" value="Radical_SAM"/>
    <property type="match status" value="1"/>
</dbReference>
<dbReference type="FunFam" id="3.20.20.70:FF:000023">
    <property type="entry name" value="Lipoyl synthase"/>
    <property type="match status" value="1"/>
</dbReference>
<dbReference type="Gene3D" id="3.20.20.70">
    <property type="entry name" value="Aldolase class I"/>
    <property type="match status" value="1"/>
</dbReference>
<dbReference type="HAMAP" id="MF_00206">
    <property type="entry name" value="Lipoyl_synth"/>
    <property type="match status" value="1"/>
</dbReference>
<dbReference type="InterPro" id="IPR013785">
    <property type="entry name" value="Aldolase_TIM"/>
</dbReference>
<dbReference type="InterPro" id="IPR006638">
    <property type="entry name" value="Elp3/MiaA/NifB-like_rSAM"/>
</dbReference>
<dbReference type="InterPro" id="IPR031691">
    <property type="entry name" value="LIAS_N"/>
</dbReference>
<dbReference type="InterPro" id="IPR003698">
    <property type="entry name" value="Lipoyl_synth"/>
</dbReference>
<dbReference type="InterPro" id="IPR007197">
    <property type="entry name" value="rSAM"/>
</dbReference>
<dbReference type="NCBIfam" id="TIGR00510">
    <property type="entry name" value="lipA"/>
    <property type="match status" value="1"/>
</dbReference>
<dbReference type="NCBIfam" id="NF004019">
    <property type="entry name" value="PRK05481.1"/>
    <property type="match status" value="1"/>
</dbReference>
<dbReference type="NCBIfam" id="NF009544">
    <property type="entry name" value="PRK12928.1"/>
    <property type="match status" value="1"/>
</dbReference>
<dbReference type="PANTHER" id="PTHR10949">
    <property type="entry name" value="LIPOYL SYNTHASE"/>
    <property type="match status" value="1"/>
</dbReference>
<dbReference type="PANTHER" id="PTHR10949:SF0">
    <property type="entry name" value="LIPOYL SYNTHASE, MITOCHONDRIAL"/>
    <property type="match status" value="1"/>
</dbReference>
<dbReference type="Pfam" id="PF16881">
    <property type="entry name" value="LIAS_N"/>
    <property type="match status" value="1"/>
</dbReference>
<dbReference type="Pfam" id="PF04055">
    <property type="entry name" value="Radical_SAM"/>
    <property type="match status" value="1"/>
</dbReference>
<dbReference type="PIRSF" id="PIRSF005963">
    <property type="entry name" value="Lipoyl_synth"/>
    <property type="match status" value="1"/>
</dbReference>
<dbReference type="SFLD" id="SFLDF00271">
    <property type="entry name" value="lipoyl_synthase"/>
    <property type="match status" value="1"/>
</dbReference>
<dbReference type="SFLD" id="SFLDS00029">
    <property type="entry name" value="Radical_SAM"/>
    <property type="match status" value="1"/>
</dbReference>
<dbReference type="SMART" id="SM00729">
    <property type="entry name" value="Elp3"/>
    <property type="match status" value="1"/>
</dbReference>
<dbReference type="SUPFAM" id="SSF102114">
    <property type="entry name" value="Radical SAM enzymes"/>
    <property type="match status" value="1"/>
</dbReference>
<dbReference type="PROSITE" id="PS51918">
    <property type="entry name" value="RADICAL_SAM"/>
    <property type="match status" value="1"/>
</dbReference>